<dbReference type="EMBL" id="U73857">
    <property type="protein sequence ID" value="AAB18024.1"/>
    <property type="status" value="ALT_INIT"/>
    <property type="molecule type" value="Genomic_DNA"/>
</dbReference>
<dbReference type="EMBL" id="U00096">
    <property type="protein sequence ID" value="AAC73399.1"/>
    <property type="molecule type" value="Genomic_DNA"/>
</dbReference>
<dbReference type="EMBL" id="AP009048">
    <property type="protein sequence ID" value="BAE76081.1"/>
    <property type="molecule type" value="Genomic_DNA"/>
</dbReference>
<dbReference type="PIR" id="H64755">
    <property type="entry name" value="H64755"/>
</dbReference>
<dbReference type="RefSeq" id="NP_414830.1">
    <property type="nucleotide sequence ID" value="NC_000913.3"/>
</dbReference>
<dbReference type="RefSeq" id="WP_000803998.1">
    <property type="nucleotide sequence ID" value="NZ_STEB01000020.1"/>
</dbReference>
<dbReference type="PDB" id="6I7V">
    <property type="method" value="X-ray"/>
    <property type="resolution" value="2.90 A"/>
    <property type="chains" value="D7=1-68"/>
</dbReference>
<dbReference type="PDBsum" id="6I7V"/>
<dbReference type="SMR" id="P0A7N1"/>
<dbReference type="BioGRID" id="4263546">
    <property type="interactions" value="18"/>
</dbReference>
<dbReference type="BioGRID" id="849357">
    <property type="interactions" value="2"/>
</dbReference>
<dbReference type="ComplexPortal" id="CPX-3807">
    <property type="entry name" value="50S large ribosomal subunit"/>
</dbReference>
<dbReference type="FunCoup" id="P0A7N1">
    <property type="interactions" value="97"/>
</dbReference>
<dbReference type="IntAct" id="P0A7N1">
    <property type="interactions" value="2"/>
</dbReference>
<dbReference type="STRING" id="511145.b0296"/>
<dbReference type="PaxDb" id="511145-b0296"/>
<dbReference type="EnsemblBacteria" id="AAC73399">
    <property type="protein sequence ID" value="AAC73399"/>
    <property type="gene ID" value="b0296"/>
</dbReference>
<dbReference type="GeneID" id="944960"/>
<dbReference type="KEGG" id="ecj:JW5035"/>
<dbReference type="KEGG" id="eco:b0296"/>
<dbReference type="KEGG" id="ecoc:C3026_01450"/>
<dbReference type="KEGG" id="ecoc:C3026_24080"/>
<dbReference type="PATRIC" id="fig|511145.12.peg.301"/>
<dbReference type="EchoBASE" id="EB4072"/>
<dbReference type="eggNOG" id="COG0254">
    <property type="taxonomic scope" value="Bacteria"/>
</dbReference>
<dbReference type="HOGENOM" id="CLU_114306_2_1_6"/>
<dbReference type="InParanoid" id="P0A7N1"/>
<dbReference type="OMA" id="YRLVAFK"/>
<dbReference type="OrthoDB" id="9803251at2"/>
<dbReference type="PhylomeDB" id="P0A7N1"/>
<dbReference type="BioCyc" id="EcoCyc:G6167-MONOMER"/>
<dbReference type="PRO" id="PR:P0A7N1"/>
<dbReference type="Proteomes" id="UP000000625">
    <property type="component" value="Chromosome"/>
</dbReference>
<dbReference type="GO" id="GO:0005737">
    <property type="term" value="C:cytoplasm"/>
    <property type="evidence" value="ECO:0000314"/>
    <property type="project" value="ComplexPortal"/>
</dbReference>
<dbReference type="GO" id="GO:0022625">
    <property type="term" value="C:cytosolic large ribosomal subunit"/>
    <property type="evidence" value="ECO:0000314"/>
    <property type="project" value="EcoCyc"/>
</dbReference>
<dbReference type="GO" id="GO:0003735">
    <property type="term" value="F:structural constituent of ribosome"/>
    <property type="evidence" value="ECO:0000314"/>
    <property type="project" value="EcoCyc"/>
</dbReference>
<dbReference type="GO" id="GO:0034224">
    <property type="term" value="P:cellular response to zinc ion starvation"/>
    <property type="evidence" value="ECO:0000315"/>
    <property type="project" value="EcoCyc"/>
</dbReference>
<dbReference type="GO" id="GO:0002181">
    <property type="term" value="P:cytoplasmic translation"/>
    <property type="evidence" value="ECO:0000303"/>
    <property type="project" value="ComplexPortal"/>
</dbReference>
<dbReference type="GO" id="GO:0006412">
    <property type="term" value="P:translation"/>
    <property type="evidence" value="ECO:0000314"/>
    <property type="project" value="EcoCyc"/>
</dbReference>
<dbReference type="FunFam" id="4.10.830.30:FF:000002">
    <property type="entry name" value="50S ribosomal protein L31 type B"/>
    <property type="match status" value="1"/>
</dbReference>
<dbReference type="Gene3D" id="4.10.830.30">
    <property type="entry name" value="Ribosomal protein L31"/>
    <property type="match status" value="1"/>
</dbReference>
<dbReference type="HAMAP" id="MF_00502">
    <property type="entry name" value="Ribosomal_bL31_2"/>
    <property type="match status" value="1"/>
</dbReference>
<dbReference type="InterPro" id="IPR034704">
    <property type="entry name" value="Ribosomal_bL28/bL31-like_sf"/>
</dbReference>
<dbReference type="InterPro" id="IPR002150">
    <property type="entry name" value="Ribosomal_bL31"/>
</dbReference>
<dbReference type="InterPro" id="IPR027493">
    <property type="entry name" value="Ribosomal_bL31_B"/>
</dbReference>
<dbReference type="InterPro" id="IPR042105">
    <property type="entry name" value="Ribosomal_bL31_sf"/>
</dbReference>
<dbReference type="NCBIfam" id="TIGR00105">
    <property type="entry name" value="L31"/>
    <property type="match status" value="1"/>
</dbReference>
<dbReference type="NCBIfam" id="NF002462">
    <property type="entry name" value="PRK01678.1"/>
    <property type="match status" value="1"/>
</dbReference>
<dbReference type="PANTHER" id="PTHR33280">
    <property type="entry name" value="50S RIBOSOMAL PROTEIN L31, CHLOROPLASTIC"/>
    <property type="match status" value="1"/>
</dbReference>
<dbReference type="PANTHER" id="PTHR33280:SF1">
    <property type="entry name" value="LARGE RIBOSOMAL SUBUNIT PROTEIN BL31C"/>
    <property type="match status" value="1"/>
</dbReference>
<dbReference type="Pfam" id="PF01197">
    <property type="entry name" value="Ribosomal_L31"/>
    <property type="match status" value="1"/>
</dbReference>
<dbReference type="PRINTS" id="PR01249">
    <property type="entry name" value="RIBOSOMALL31"/>
</dbReference>
<dbReference type="SUPFAM" id="SSF143800">
    <property type="entry name" value="L28p-like"/>
    <property type="match status" value="1"/>
</dbReference>
<dbReference type="PROSITE" id="PS01143">
    <property type="entry name" value="RIBOSOMAL_L31"/>
    <property type="match status" value="1"/>
</dbReference>
<gene>
    <name type="primary">ykgM</name>
    <name type="synonym">rpmE2</name>
    <name type="ordered locus">b0296</name>
    <name type="ordered locus">JW5035</name>
</gene>
<feature type="chain" id="PRO_0000173222" description="Large ribosomal subunit protein bL31B">
    <location>
        <begin position="1"/>
        <end position="87"/>
    </location>
</feature>
<evidence type="ECO:0000250" key="1"/>
<evidence type="ECO:0000269" key="2">
    <source>
    </source>
</evidence>
<evidence type="ECO:0000269" key="3">
    <source>
    </source>
</evidence>
<evidence type="ECO:0000269" key="4">
    <source>
    </source>
</evidence>
<evidence type="ECO:0000303" key="5">
    <source>
    </source>
</evidence>
<evidence type="ECO:0000305" key="6"/>
<proteinExistence type="evidence at protein level"/>
<protein>
    <recommendedName>
        <fullName evidence="5">Large ribosomal subunit protein bL31B</fullName>
    </recommendedName>
    <alternativeName>
        <fullName>50S ribosomal protein L31 type B</fullName>
    </alternativeName>
</protein>
<accession>P0A7N1</accession>
<accession>P71302</accession>
<accession>Q2MCC5</accession>
<keyword id="KW-0002">3D-structure</keyword>
<keyword id="KW-1185">Reference proteome</keyword>
<keyword id="KW-0687">Ribonucleoprotein</keyword>
<keyword id="KW-0689">Ribosomal protein</keyword>
<comment type="subunit">
    <text evidence="1">Part of the 50S ribosomal subunit.</text>
</comment>
<comment type="induction">
    <text evidence="2 3 4">Maximally induced 30 minutes under zinc-limiting conditions, still induced in stationary phase; repressed by the zinc uptake regulation protein Zur. Probably part of the rpmE2-rpmJ2 operon.</text>
</comment>
<comment type="disruption phenotype">
    <text evidence="2">Grows poorly in the absence of zinc.</text>
</comment>
<comment type="similarity">
    <text evidence="6">Belongs to the bacterial ribosomal protein bL31 family. Type B subfamily.</text>
</comment>
<comment type="sequence caution" evidence="6">
    <conflict type="erroneous initiation">
        <sequence resource="EMBL-CDS" id="AAB18024"/>
    </conflict>
    <text>Extended N-terminus.</text>
</comment>
<organism>
    <name type="scientific">Escherichia coli (strain K12)</name>
    <dbReference type="NCBI Taxonomy" id="83333"/>
    <lineage>
        <taxon>Bacteria</taxon>
        <taxon>Pseudomonadati</taxon>
        <taxon>Pseudomonadota</taxon>
        <taxon>Gammaproteobacteria</taxon>
        <taxon>Enterobacterales</taxon>
        <taxon>Enterobacteriaceae</taxon>
        <taxon>Escherichia</taxon>
    </lineage>
</organism>
<sequence length="87" mass="9920">MKPNIHPEYRTVVFHDTSVDEYFKIGSTIKTDREIELDGVTYPYVTIDVSSKSHPFYTGKLRTVASEGNVARFTQRFGRFVSTKKGA</sequence>
<name>RL31B_ECOLI</name>
<reference key="1">
    <citation type="submission" date="1997-01" db="EMBL/GenBank/DDBJ databases">
        <title>Sequence of minutes 4-25 of Escherichia coli.</title>
        <authorList>
            <person name="Chung E."/>
            <person name="Allen E."/>
            <person name="Araujo R."/>
            <person name="Aparicio A.M."/>
            <person name="Davis K."/>
            <person name="Duncan M."/>
            <person name="Federspiel N."/>
            <person name="Hyman R."/>
            <person name="Kalman S."/>
            <person name="Komp C."/>
            <person name="Kurdi O."/>
            <person name="Lew H."/>
            <person name="Lin D."/>
            <person name="Namath A."/>
            <person name="Oefner P."/>
            <person name="Roberts D."/>
            <person name="Schramm S."/>
            <person name="Davis R.W."/>
        </authorList>
    </citation>
    <scope>NUCLEOTIDE SEQUENCE [LARGE SCALE GENOMIC DNA]</scope>
    <source>
        <strain>K12 / MG1655 / ATCC 47076</strain>
    </source>
</reference>
<reference key="2">
    <citation type="journal article" date="1997" name="Science">
        <title>The complete genome sequence of Escherichia coli K-12.</title>
        <authorList>
            <person name="Blattner F.R."/>
            <person name="Plunkett G. III"/>
            <person name="Bloch C.A."/>
            <person name="Perna N.T."/>
            <person name="Burland V."/>
            <person name="Riley M."/>
            <person name="Collado-Vides J."/>
            <person name="Glasner J.D."/>
            <person name="Rode C.K."/>
            <person name="Mayhew G.F."/>
            <person name="Gregor J."/>
            <person name="Davis N.W."/>
            <person name="Kirkpatrick H.A."/>
            <person name="Goeden M.A."/>
            <person name="Rose D.J."/>
            <person name="Mau B."/>
            <person name="Shao Y."/>
        </authorList>
    </citation>
    <scope>NUCLEOTIDE SEQUENCE [LARGE SCALE GENOMIC DNA]</scope>
    <source>
        <strain>K12 / MG1655 / ATCC 47076</strain>
    </source>
</reference>
<reference key="3">
    <citation type="journal article" date="2006" name="Mol. Syst. Biol.">
        <title>Highly accurate genome sequences of Escherichia coli K-12 strains MG1655 and W3110.</title>
        <authorList>
            <person name="Hayashi K."/>
            <person name="Morooka N."/>
            <person name="Yamamoto Y."/>
            <person name="Fujita K."/>
            <person name="Isono K."/>
            <person name="Choi S."/>
            <person name="Ohtsubo E."/>
            <person name="Baba T."/>
            <person name="Wanner B.L."/>
            <person name="Mori H."/>
            <person name="Horiuchi T."/>
        </authorList>
    </citation>
    <scope>NUCLEOTIDE SEQUENCE [LARGE SCALE GENOMIC DNA]</scope>
    <source>
        <strain>K12 / W3110 / ATCC 27325 / DSM 5911</strain>
    </source>
</reference>
<reference key="4">
    <citation type="journal article" date="2003" name="Proc. Natl. Acad. Sci. U.S.A.">
        <title>Comparative genomics of bacterial zinc regulons: enhanced ion transport, pathogenesis, and rearrangement of ribosomal proteins.</title>
        <authorList>
            <person name="Panina E.M."/>
            <person name="Mironov A.A."/>
            <person name="Gelfand M.S."/>
        </authorList>
    </citation>
    <scope>DISCUSSION OF POSSIBLE REGULATION</scope>
    <source>
        <strain>K12 / MG1655 / ATCC 47076</strain>
    </source>
</reference>
<reference key="5">
    <citation type="journal article" date="2009" name="J. Biol. Chem.">
        <title>Severe zinc depletion of Escherichia coli: roles for high affinity zinc binding by ZinT, zinc transport and zinc-independent proteins.</title>
        <authorList>
            <person name="Graham A.I."/>
            <person name="Hunt S."/>
            <person name="Stokes S.L."/>
            <person name="Bramall N."/>
            <person name="Bunch J."/>
            <person name="Cox A.G."/>
            <person name="McLeod C.W."/>
            <person name="Poole R.K."/>
        </authorList>
    </citation>
    <scope>INDUCTION</scope>
    <scope>DISRUPTION PHENOTYPE</scope>
    <source>
        <strain>K12 / MG1655 / ATCC 47076</strain>
    </source>
</reference>
<reference key="6">
    <citation type="journal article" date="2010" name="J. Bacteriol.">
        <title>Small stress response proteins in Escherichia coli: proteins missed by classical proteomic studies.</title>
        <authorList>
            <person name="Hemm M.R."/>
            <person name="Paul B.J."/>
            <person name="Miranda-Rios J."/>
            <person name="Zhang A."/>
            <person name="Soltanzad N."/>
            <person name="Storz G."/>
        </authorList>
    </citation>
    <scope>INDUCTION</scope>
    <scope>OPERON STRUCTURE</scope>
    <source>
        <strain>K12 / MG1655 / ATCC 47076</strain>
    </source>
</reference>
<reference key="7">
    <citation type="journal article" date="2012" name="J. Inorg. Biochem.">
        <title>Characterization of Zn(II)-responsive ribosomal proteins YkgM and L31 in E. coli.</title>
        <authorList>
            <person name="Hensley M.P."/>
            <person name="Gunasekera T.S."/>
            <person name="Easton J.A."/>
            <person name="Sigdel T.K."/>
            <person name="Sugarbaker S.A."/>
            <person name="Klingbeil L."/>
            <person name="Breece R.M."/>
            <person name="Tierney D.L."/>
            <person name="Crowder M.W."/>
        </authorList>
    </citation>
    <scope>INDUCTION</scope>
    <source>
        <strain>BW21135</strain>
    </source>
</reference>
<reference key="8">
    <citation type="journal article" date="2014" name="Curr. Opin. Struct. Biol.">
        <title>A new system for naming ribosomal proteins.</title>
        <authorList>
            <person name="Ban N."/>
            <person name="Beckmann R."/>
            <person name="Cate J.H.D."/>
            <person name="Dinman J.D."/>
            <person name="Dragon F."/>
            <person name="Ellis S.R."/>
            <person name="Lafontaine D.L.J."/>
            <person name="Lindahl L."/>
            <person name="Liljas A."/>
            <person name="Lipton J.M."/>
            <person name="McAlear M.A."/>
            <person name="Moore P.B."/>
            <person name="Noller H.F."/>
            <person name="Ortega J."/>
            <person name="Panse V.G."/>
            <person name="Ramakrishnan V."/>
            <person name="Spahn C.M.T."/>
            <person name="Steitz T.A."/>
            <person name="Tchorzewski M."/>
            <person name="Tollervey D."/>
            <person name="Warren A.J."/>
            <person name="Williamson J.R."/>
            <person name="Wilson D."/>
            <person name="Yonath A."/>
            <person name="Yusupov M."/>
        </authorList>
    </citation>
    <scope>NOMENCLATURE</scope>
</reference>